<protein>
    <recommendedName>
        <fullName evidence="1">Small ribosomal subunit protein uS15</fullName>
    </recommendedName>
    <alternativeName>
        <fullName evidence="2">30S ribosomal protein S15</fullName>
    </alternativeName>
</protein>
<organism>
    <name type="scientific">Campylobacter jejuni subsp. jejuni serotype O:2 (strain ATCC 700819 / NCTC 11168)</name>
    <dbReference type="NCBI Taxonomy" id="192222"/>
    <lineage>
        <taxon>Bacteria</taxon>
        <taxon>Pseudomonadati</taxon>
        <taxon>Campylobacterota</taxon>
        <taxon>Epsilonproteobacteria</taxon>
        <taxon>Campylobacterales</taxon>
        <taxon>Campylobacteraceae</taxon>
        <taxon>Campylobacter</taxon>
    </lineage>
</organism>
<comment type="function">
    <text evidence="1">One of the primary rRNA binding proteins, it binds directly to 16S rRNA where it helps nucleate assembly of the platform of the 30S subunit by binding and bridging several RNA helices of the 16S rRNA.</text>
</comment>
<comment type="function">
    <text evidence="1">Forms an intersubunit bridge (bridge B4) with the 23S rRNA of the 50S subunit in the ribosome.</text>
</comment>
<comment type="subunit">
    <text evidence="1">Part of the 30S ribosomal subunit. Forms a bridge to the 50S subunit in the 70S ribosome, contacting the 23S rRNA.</text>
</comment>
<comment type="similarity">
    <text evidence="1">Belongs to the universal ribosomal protein uS15 family.</text>
</comment>
<reference key="1">
    <citation type="journal article" date="2000" name="Nature">
        <title>The genome sequence of the food-borne pathogen Campylobacter jejuni reveals hypervariable sequences.</title>
        <authorList>
            <person name="Parkhill J."/>
            <person name="Wren B.W."/>
            <person name="Mungall K.L."/>
            <person name="Ketley J.M."/>
            <person name="Churcher C.M."/>
            <person name="Basham D."/>
            <person name="Chillingworth T."/>
            <person name="Davies R.M."/>
            <person name="Feltwell T."/>
            <person name="Holroyd S."/>
            <person name="Jagels K."/>
            <person name="Karlyshev A.V."/>
            <person name="Moule S."/>
            <person name="Pallen M.J."/>
            <person name="Penn C.W."/>
            <person name="Quail M.A."/>
            <person name="Rajandream M.A."/>
            <person name="Rutherford K.M."/>
            <person name="van Vliet A.H.M."/>
            <person name="Whitehead S."/>
            <person name="Barrell B.G."/>
        </authorList>
    </citation>
    <scope>NUCLEOTIDE SEQUENCE [LARGE SCALE GENOMIC DNA]</scope>
    <source>
        <strain>ATCC 700819 / NCTC 11168</strain>
    </source>
</reference>
<gene>
    <name evidence="1" type="primary">rpsO</name>
    <name type="ordered locus">Cj0884</name>
</gene>
<feature type="chain" id="PRO_0000115407" description="Small ribosomal subunit protein uS15">
    <location>
        <begin position="1"/>
        <end position="90"/>
    </location>
</feature>
<feature type="helix" evidence="3">
    <location>
        <begin position="5"/>
        <end position="15"/>
    </location>
</feature>
<feature type="helix" evidence="3">
    <location>
        <begin position="25"/>
        <end position="51"/>
    </location>
</feature>
<feature type="turn" evidence="3">
    <location>
        <begin position="52"/>
        <end position="55"/>
    </location>
</feature>
<feature type="helix" evidence="3">
    <location>
        <begin position="56"/>
        <end position="73"/>
    </location>
</feature>
<feature type="helix" evidence="3">
    <location>
        <begin position="75"/>
        <end position="84"/>
    </location>
</feature>
<dbReference type="EMBL" id="AL111168">
    <property type="protein sequence ID" value="CAL35006.1"/>
    <property type="molecule type" value="Genomic_DNA"/>
</dbReference>
<dbReference type="PIR" id="E81361">
    <property type="entry name" value="E81361"/>
</dbReference>
<dbReference type="RefSeq" id="WP_002852579.1">
    <property type="nucleotide sequence ID" value="NZ_SZUC01000001.1"/>
</dbReference>
<dbReference type="RefSeq" id="YP_002344284.1">
    <property type="nucleotide sequence ID" value="NC_002163.1"/>
</dbReference>
<dbReference type="PDB" id="4IYL">
    <property type="method" value="X-ray"/>
    <property type="resolution" value="2.36 A"/>
    <property type="chains" value="A=1-90"/>
</dbReference>
<dbReference type="PDBsum" id="4IYL"/>
<dbReference type="SMR" id="Q0PA13"/>
<dbReference type="IntAct" id="Q0PA13">
    <property type="interactions" value="20"/>
</dbReference>
<dbReference type="STRING" id="192222.Cj0884"/>
<dbReference type="PaxDb" id="192222-Cj0884"/>
<dbReference type="EnsemblBacteria" id="CAL35006">
    <property type="protein sequence ID" value="CAL35006"/>
    <property type="gene ID" value="Cj0884"/>
</dbReference>
<dbReference type="GeneID" id="905176"/>
<dbReference type="KEGG" id="cje:Cj0884"/>
<dbReference type="PATRIC" id="fig|192222.6.peg.869"/>
<dbReference type="eggNOG" id="COG0184">
    <property type="taxonomic scope" value="Bacteria"/>
</dbReference>
<dbReference type="HOGENOM" id="CLU_148518_0_0_7"/>
<dbReference type="OrthoDB" id="9799262at2"/>
<dbReference type="EvolutionaryTrace" id="Q0PA13"/>
<dbReference type="Proteomes" id="UP000000799">
    <property type="component" value="Chromosome"/>
</dbReference>
<dbReference type="GO" id="GO:0022627">
    <property type="term" value="C:cytosolic small ribosomal subunit"/>
    <property type="evidence" value="ECO:0007669"/>
    <property type="project" value="TreeGrafter"/>
</dbReference>
<dbReference type="GO" id="GO:0019843">
    <property type="term" value="F:rRNA binding"/>
    <property type="evidence" value="ECO:0007669"/>
    <property type="project" value="UniProtKB-UniRule"/>
</dbReference>
<dbReference type="GO" id="GO:0003735">
    <property type="term" value="F:structural constituent of ribosome"/>
    <property type="evidence" value="ECO:0007669"/>
    <property type="project" value="InterPro"/>
</dbReference>
<dbReference type="GO" id="GO:0006412">
    <property type="term" value="P:translation"/>
    <property type="evidence" value="ECO:0007669"/>
    <property type="project" value="UniProtKB-UniRule"/>
</dbReference>
<dbReference type="CDD" id="cd00353">
    <property type="entry name" value="Ribosomal_S15p_S13e"/>
    <property type="match status" value="1"/>
</dbReference>
<dbReference type="FunFam" id="1.10.287.10:FF:000002">
    <property type="entry name" value="30S ribosomal protein S15"/>
    <property type="match status" value="1"/>
</dbReference>
<dbReference type="Gene3D" id="6.10.250.3130">
    <property type="match status" value="1"/>
</dbReference>
<dbReference type="Gene3D" id="1.10.287.10">
    <property type="entry name" value="S15/NS1, RNA-binding"/>
    <property type="match status" value="1"/>
</dbReference>
<dbReference type="HAMAP" id="MF_01343_B">
    <property type="entry name" value="Ribosomal_uS15_B"/>
    <property type="match status" value="1"/>
</dbReference>
<dbReference type="InterPro" id="IPR000589">
    <property type="entry name" value="Ribosomal_uS15"/>
</dbReference>
<dbReference type="InterPro" id="IPR005290">
    <property type="entry name" value="Ribosomal_uS15_bac-type"/>
</dbReference>
<dbReference type="InterPro" id="IPR009068">
    <property type="entry name" value="uS15_NS1_RNA-bd_sf"/>
</dbReference>
<dbReference type="NCBIfam" id="TIGR00952">
    <property type="entry name" value="S15_bact"/>
    <property type="match status" value="1"/>
</dbReference>
<dbReference type="PANTHER" id="PTHR23321">
    <property type="entry name" value="RIBOSOMAL PROTEIN S15, BACTERIAL AND ORGANELLAR"/>
    <property type="match status" value="1"/>
</dbReference>
<dbReference type="PANTHER" id="PTHR23321:SF26">
    <property type="entry name" value="SMALL RIBOSOMAL SUBUNIT PROTEIN US15M"/>
    <property type="match status" value="1"/>
</dbReference>
<dbReference type="Pfam" id="PF00312">
    <property type="entry name" value="Ribosomal_S15"/>
    <property type="match status" value="1"/>
</dbReference>
<dbReference type="SMART" id="SM01387">
    <property type="entry name" value="Ribosomal_S15"/>
    <property type="match status" value="1"/>
</dbReference>
<dbReference type="SUPFAM" id="SSF47060">
    <property type="entry name" value="S15/NS1 RNA-binding domain"/>
    <property type="match status" value="1"/>
</dbReference>
<dbReference type="PROSITE" id="PS00362">
    <property type="entry name" value="RIBOSOMAL_S15"/>
    <property type="match status" value="1"/>
</dbReference>
<sequence length="90" mass="10226">MALDSAKKAEIVAKFAKKPGDTGSTEVQVALLTARIAELTEHLKIYKKDFSSRLGLLKLVGQRKRLLSYLKRKDYNSYSKLITELNLRDK</sequence>
<evidence type="ECO:0000255" key="1">
    <source>
        <dbReference type="HAMAP-Rule" id="MF_01343"/>
    </source>
</evidence>
<evidence type="ECO:0000305" key="2"/>
<evidence type="ECO:0007829" key="3">
    <source>
        <dbReference type="PDB" id="4IYL"/>
    </source>
</evidence>
<name>RS15_CAMJE</name>
<accession>Q0PA13</accession>
<accession>P49392</accession>
<accession>Q9PP46</accession>
<keyword id="KW-0002">3D-structure</keyword>
<keyword id="KW-1185">Reference proteome</keyword>
<keyword id="KW-0687">Ribonucleoprotein</keyword>
<keyword id="KW-0689">Ribosomal protein</keyword>
<keyword id="KW-0694">RNA-binding</keyword>
<keyword id="KW-0699">rRNA-binding</keyword>
<proteinExistence type="evidence at protein level"/>